<accession>B2I3B6</accession>
<feature type="chain" id="PRO_1000115205" description="Homoserine O-succinyltransferase">
    <location>
        <begin position="1"/>
        <end position="386"/>
    </location>
</feature>
<feature type="domain" description="AB hydrolase-1" evidence="1">
    <location>
        <begin position="49"/>
        <end position="358"/>
    </location>
</feature>
<feature type="active site" description="Nucleophile" evidence="1">
    <location>
        <position position="156"/>
    </location>
</feature>
<feature type="active site" evidence="1">
    <location>
        <position position="321"/>
    </location>
</feature>
<feature type="active site" evidence="1">
    <location>
        <position position="354"/>
    </location>
</feature>
<feature type="binding site" evidence="1">
    <location>
        <position position="226"/>
    </location>
    <ligand>
        <name>substrate</name>
    </ligand>
</feature>
<feature type="binding site" evidence="1">
    <location>
        <position position="355"/>
    </location>
    <ligand>
        <name>substrate</name>
    </ligand>
</feature>
<feature type="site" description="Important for acyl-CoA specificity" evidence="1">
    <location>
        <position position="323"/>
    </location>
</feature>
<keyword id="KW-0012">Acyltransferase</keyword>
<keyword id="KW-0028">Amino-acid biosynthesis</keyword>
<keyword id="KW-0963">Cytoplasm</keyword>
<keyword id="KW-0486">Methionine biosynthesis</keyword>
<keyword id="KW-0808">Transferase</keyword>
<gene>
    <name evidence="1" type="primary">metXS</name>
    <name type="ordered locus">ACICU_00482</name>
</gene>
<sequence>MSFPADSVGLVTPQKFQFEEPLHLECGRVLPRFELMVETYGTLNADKSNAILICHALSGHHHAAGYHHEDDKKAGWWDSCIGPGKAIDTNKFFVVALNNIGGCSGSTGPTSPNPENDNRPYGPDFPLVTVRDWVKTQAMLSDRLGISVWYAVVGGSLGGMQALQWSVDYPDRLQKCVVIASAPKLSAQNIAFNEVARQSILSDPDFHHGRYLENDSYPKRGLILARMVGHITYLSEEAMKQKFGRDLKSGKFMYGFDVEFQVESYLRYQGEQFSRNFDANTYLIMTKALDYFDPSREYGHSLTEAMSKTKCQFLIVSFTTDWRFAPSRSQEIVDALITNHKPVSYLDIDAEQGHDSFLFPIPLYVKTLRAFLGGEEHLKSTSLEAS</sequence>
<name>METXS_ACIBC</name>
<dbReference type="EC" id="2.3.1.46" evidence="1"/>
<dbReference type="EMBL" id="CP000863">
    <property type="protein sequence ID" value="ACC55794.1"/>
    <property type="molecule type" value="Genomic_DNA"/>
</dbReference>
<dbReference type="SMR" id="B2I3B6"/>
<dbReference type="ESTHER" id="acib3-metx">
    <property type="family name" value="Homoserine_transacetylase"/>
</dbReference>
<dbReference type="KEGG" id="abc:ACICU_00482"/>
<dbReference type="HOGENOM" id="CLU_028760_1_2_6"/>
<dbReference type="UniPathway" id="UPA00051">
    <property type="reaction ID" value="UER00075"/>
</dbReference>
<dbReference type="Proteomes" id="UP000008839">
    <property type="component" value="Chromosome"/>
</dbReference>
<dbReference type="GO" id="GO:0005737">
    <property type="term" value="C:cytoplasm"/>
    <property type="evidence" value="ECO:0007669"/>
    <property type="project" value="UniProtKB-SubCell"/>
</dbReference>
<dbReference type="GO" id="GO:0004414">
    <property type="term" value="F:homoserine O-acetyltransferase activity"/>
    <property type="evidence" value="ECO:0007669"/>
    <property type="project" value="TreeGrafter"/>
</dbReference>
<dbReference type="GO" id="GO:0008899">
    <property type="term" value="F:homoserine O-succinyltransferase activity"/>
    <property type="evidence" value="ECO:0007669"/>
    <property type="project" value="UniProtKB-UniRule"/>
</dbReference>
<dbReference type="GO" id="GO:0009092">
    <property type="term" value="P:homoserine metabolic process"/>
    <property type="evidence" value="ECO:0007669"/>
    <property type="project" value="TreeGrafter"/>
</dbReference>
<dbReference type="GO" id="GO:0009086">
    <property type="term" value="P:methionine biosynthetic process"/>
    <property type="evidence" value="ECO:0007669"/>
    <property type="project" value="UniProtKB-UniRule"/>
</dbReference>
<dbReference type="FunFam" id="1.10.1740.110:FF:000001">
    <property type="entry name" value="Homoserine O-acetyltransferase"/>
    <property type="match status" value="1"/>
</dbReference>
<dbReference type="Gene3D" id="1.10.1740.110">
    <property type="match status" value="1"/>
</dbReference>
<dbReference type="Gene3D" id="3.40.50.1820">
    <property type="entry name" value="alpha/beta hydrolase"/>
    <property type="match status" value="1"/>
</dbReference>
<dbReference type="HAMAP" id="MF_00296">
    <property type="entry name" value="MetX_acyltransf"/>
    <property type="match status" value="1"/>
</dbReference>
<dbReference type="InterPro" id="IPR000073">
    <property type="entry name" value="AB_hydrolase_1"/>
</dbReference>
<dbReference type="InterPro" id="IPR029058">
    <property type="entry name" value="AB_hydrolase_fold"/>
</dbReference>
<dbReference type="InterPro" id="IPR008220">
    <property type="entry name" value="HAT_MetX-like"/>
</dbReference>
<dbReference type="NCBIfam" id="TIGR01392">
    <property type="entry name" value="homoserO_Ac_trn"/>
    <property type="match status" value="1"/>
</dbReference>
<dbReference type="NCBIfam" id="NF001209">
    <property type="entry name" value="PRK00175.1"/>
    <property type="match status" value="1"/>
</dbReference>
<dbReference type="PANTHER" id="PTHR32268">
    <property type="entry name" value="HOMOSERINE O-ACETYLTRANSFERASE"/>
    <property type="match status" value="1"/>
</dbReference>
<dbReference type="PANTHER" id="PTHR32268:SF11">
    <property type="entry name" value="HOMOSERINE O-ACETYLTRANSFERASE"/>
    <property type="match status" value="1"/>
</dbReference>
<dbReference type="Pfam" id="PF00561">
    <property type="entry name" value="Abhydrolase_1"/>
    <property type="match status" value="1"/>
</dbReference>
<dbReference type="PIRSF" id="PIRSF000443">
    <property type="entry name" value="Homoser_Ac_trans"/>
    <property type="match status" value="1"/>
</dbReference>
<dbReference type="SUPFAM" id="SSF53474">
    <property type="entry name" value="alpha/beta-Hydrolases"/>
    <property type="match status" value="1"/>
</dbReference>
<reference key="1">
    <citation type="journal article" date="2008" name="Antimicrob. Agents Chemother.">
        <title>Whole-genome pyrosequencing of an epidemic multidrug-resistant Acinetobacter baumannii strain belonging to the European clone II group.</title>
        <authorList>
            <person name="Iacono M."/>
            <person name="Villa L."/>
            <person name="Fortini D."/>
            <person name="Bordoni R."/>
            <person name="Imperi F."/>
            <person name="Bonnal R.J."/>
            <person name="Sicheritz-Ponten T."/>
            <person name="De Bellis G."/>
            <person name="Visca P."/>
            <person name="Cassone A."/>
            <person name="Carattoli A."/>
        </authorList>
    </citation>
    <scope>NUCLEOTIDE SEQUENCE [LARGE SCALE GENOMIC DNA]</scope>
    <source>
        <strain>ACICU</strain>
    </source>
</reference>
<organism>
    <name type="scientific">Acinetobacter baumannii (strain ACICU)</name>
    <dbReference type="NCBI Taxonomy" id="405416"/>
    <lineage>
        <taxon>Bacteria</taxon>
        <taxon>Pseudomonadati</taxon>
        <taxon>Pseudomonadota</taxon>
        <taxon>Gammaproteobacteria</taxon>
        <taxon>Moraxellales</taxon>
        <taxon>Moraxellaceae</taxon>
        <taxon>Acinetobacter</taxon>
        <taxon>Acinetobacter calcoaceticus/baumannii complex</taxon>
    </lineage>
</organism>
<protein>
    <recommendedName>
        <fullName evidence="1">Homoserine O-succinyltransferase</fullName>
        <shortName evidence="1">HST</shortName>
        <ecNumber evidence="1">2.3.1.46</ecNumber>
    </recommendedName>
    <alternativeName>
        <fullName evidence="1">Homoserine transsuccinylase</fullName>
        <shortName evidence="1">HTS</shortName>
    </alternativeName>
</protein>
<evidence type="ECO:0000255" key="1">
    <source>
        <dbReference type="HAMAP-Rule" id="MF_00296"/>
    </source>
</evidence>
<proteinExistence type="inferred from homology"/>
<comment type="function">
    <text evidence="1">Transfers a succinyl group from succinyl-CoA to L-homoserine, forming succinyl-L-homoserine.</text>
</comment>
<comment type="catalytic activity">
    <reaction evidence="1">
        <text>L-homoserine + succinyl-CoA = O-succinyl-L-homoserine + CoA</text>
        <dbReference type="Rhea" id="RHEA:22008"/>
        <dbReference type="ChEBI" id="CHEBI:57287"/>
        <dbReference type="ChEBI" id="CHEBI:57292"/>
        <dbReference type="ChEBI" id="CHEBI:57476"/>
        <dbReference type="ChEBI" id="CHEBI:57661"/>
        <dbReference type="EC" id="2.3.1.46"/>
    </reaction>
</comment>
<comment type="pathway">
    <text evidence="1">Amino-acid biosynthesis; L-methionine biosynthesis via de novo pathway; O-succinyl-L-homoserine from L-homoserine: step 1/1.</text>
</comment>
<comment type="subunit">
    <text evidence="1">Homodimer.</text>
</comment>
<comment type="subcellular location">
    <subcellularLocation>
        <location evidence="1">Cytoplasm</location>
    </subcellularLocation>
</comment>
<comment type="similarity">
    <text evidence="1">Belongs to the AB hydrolase superfamily. MetX family.</text>
</comment>